<protein>
    <recommendedName>
        <fullName evidence="5">Global transcription regulator sge1</fullName>
    </recommendedName>
</protein>
<proteinExistence type="inferred from homology"/>
<keyword id="KW-0539">Nucleus</keyword>
<keyword id="KW-1185">Reference proteome</keyword>
<keyword id="KW-0804">Transcription</keyword>
<keyword id="KW-0805">Transcription regulation</keyword>
<keyword id="KW-0843">Virulence</keyword>
<reference key="1">
    <citation type="journal article" date="2011" name="PLoS Pathog.">
        <title>Comparative genomics yields insights into niche adaptation of plant vascular wilt pathogens.</title>
        <authorList>
            <person name="Klosterman S.J."/>
            <person name="Subbarao K.V."/>
            <person name="Kang S."/>
            <person name="Veronese P."/>
            <person name="Gold S.E."/>
            <person name="Thomma B.P.H.J."/>
            <person name="Chen Z."/>
            <person name="Henrissat B."/>
            <person name="Lee Y.-H."/>
            <person name="Park J."/>
            <person name="Garcia-Pedrajas M.D."/>
            <person name="Barbara D.J."/>
            <person name="Anchieta A."/>
            <person name="de Jonge R."/>
            <person name="Santhanam P."/>
            <person name="Maruthachalam K."/>
            <person name="Atallah Z."/>
            <person name="Amyotte S.G."/>
            <person name="Paz Z."/>
            <person name="Inderbitzin P."/>
            <person name="Hayes R.J."/>
            <person name="Heiman D.I."/>
            <person name="Young S."/>
            <person name="Zeng Q."/>
            <person name="Engels R."/>
            <person name="Galagan J."/>
            <person name="Cuomo C.A."/>
            <person name="Dobinson K.F."/>
            <person name="Ma L.-J."/>
        </authorList>
    </citation>
    <scope>NUCLEOTIDE SEQUENCE [LARGE SCALE GENOMIC DNA]</scope>
    <source>
        <strain>VdLs.17 / ATCC MYA-4575 / FGSC 10137</strain>
    </source>
</reference>
<reference key="2">
    <citation type="journal article" date="2013" name="Mol. Plant Microbe Interact.">
        <title>Verticillium dahliae Sge1 differentially regulates expression of candidate effector genes.</title>
        <authorList>
            <person name="Santhanam P."/>
            <person name="Thomma B.P."/>
        </authorList>
    </citation>
    <scope>FUNCTION</scope>
</reference>
<dbReference type="EMBL" id="DS572706">
    <property type="protein sequence ID" value="EGY14808.1"/>
    <property type="molecule type" value="Genomic_DNA"/>
</dbReference>
<dbReference type="RefSeq" id="XP_009656971.1">
    <property type="nucleotide sequence ID" value="XM_009658676.1"/>
</dbReference>
<dbReference type="SMR" id="G2X740"/>
<dbReference type="STRING" id="498257.G2X740"/>
<dbReference type="EnsemblFungi" id="EGY14808">
    <property type="protein sequence ID" value="EGY14808"/>
    <property type="gene ID" value="VDAG_06298"/>
</dbReference>
<dbReference type="GeneID" id="20707761"/>
<dbReference type="KEGG" id="vda:VDAG_06298"/>
<dbReference type="eggNOG" id="KOG4476">
    <property type="taxonomic scope" value="Eukaryota"/>
</dbReference>
<dbReference type="HOGENOM" id="CLU_028895_5_0_1"/>
<dbReference type="InParanoid" id="G2X740"/>
<dbReference type="OMA" id="GEESHMQ"/>
<dbReference type="OrthoDB" id="35178at1028384"/>
<dbReference type="Proteomes" id="UP000001611">
    <property type="component" value="Chromosome 8"/>
</dbReference>
<dbReference type="GO" id="GO:0005634">
    <property type="term" value="C:nucleus"/>
    <property type="evidence" value="ECO:0007669"/>
    <property type="project" value="UniProtKB-SubCell"/>
</dbReference>
<dbReference type="GO" id="GO:0003677">
    <property type="term" value="F:DNA binding"/>
    <property type="evidence" value="ECO:0007669"/>
    <property type="project" value="TreeGrafter"/>
</dbReference>
<dbReference type="InterPro" id="IPR018608">
    <property type="entry name" value="Gti1/Pac2"/>
</dbReference>
<dbReference type="PANTHER" id="PTHR28027">
    <property type="entry name" value="TRANSCRIPTIONAL REGULATOR MIT1"/>
    <property type="match status" value="1"/>
</dbReference>
<dbReference type="PANTHER" id="PTHR28027:SF2">
    <property type="entry name" value="TRANSCRIPTIONAL REGULATOR MIT1"/>
    <property type="match status" value="1"/>
</dbReference>
<dbReference type="Pfam" id="PF09729">
    <property type="entry name" value="Gti1_Pac2"/>
    <property type="match status" value="1"/>
</dbReference>
<evidence type="ECO:0000250" key="1">
    <source>
        <dbReference type="UniProtKB" id="J9N5P9"/>
    </source>
</evidence>
<evidence type="ECO:0000256" key="2">
    <source>
        <dbReference type="SAM" id="MobiDB-lite"/>
    </source>
</evidence>
<evidence type="ECO:0000269" key="3">
    <source>
    </source>
</evidence>
<evidence type="ECO:0000303" key="4">
    <source>
    </source>
</evidence>
<evidence type="ECO:0000305" key="5"/>
<evidence type="ECO:0000312" key="6">
    <source>
        <dbReference type="EMBL" id="EGY14808.1"/>
    </source>
</evidence>
<comment type="function">
    <text evidence="3">Global transcriptional regulator of pathogenicity. Differentially regulates expression of effector genes. Also required for radial growth and production of asexual conidiospores, and plays a role in mycelium pigmentation. Not required for induction of Ave1, the effector that activates resistance mediated by the Ve1 immune receptor in tomato.</text>
</comment>
<comment type="subcellular location">
    <subcellularLocation>
        <location evidence="1">Nucleus</location>
    </subcellularLocation>
</comment>
<comment type="similarity">
    <text evidence="5">Belongs to the MIT1/WOR1 family.</text>
</comment>
<organism>
    <name type="scientific">Verticillium dahliae (strain VdLs.17 / ATCC MYA-4575 / FGSC 10137)</name>
    <name type="common">Verticillium wilt</name>
    <dbReference type="NCBI Taxonomy" id="498257"/>
    <lineage>
        <taxon>Eukaryota</taxon>
        <taxon>Fungi</taxon>
        <taxon>Dikarya</taxon>
        <taxon>Ascomycota</taxon>
        <taxon>Pezizomycotina</taxon>
        <taxon>Sordariomycetes</taxon>
        <taxon>Hypocreomycetidae</taxon>
        <taxon>Glomerellales</taxon>
        <taxon>Plectosphaerellaceae</taxon>
        <taxon>Verticillium</taxon>
    </lineage>
</organism>
<name>WOR1_VERDV</name>
<gene>
    <name evidence="4" type="primary">sge1</name>
    <name evidence="6" type="ORF">VDAG_06298</name>
</gene>
<sequence>MSAANVPLEATWQGHVASTLDAVVLFEACLSGNLRHVPRRPHDRERQDLIQSGQIFIYEEHASGIKRWTDGVTWSPSRILGNYLIYRELERPFPPGEKKRAAKKNKKQTNGGISKSEGCLRQNTGMNGTATGANAANLSSAGSMDPSEASRNPERALIGSLVDSYPFKEGGLVKKTISVQFRSVPHHLVSYYTVQDVMSGALATPTSHSGFLRNIVPRPELILNQNFRAPIDEVDVDDNRLIQHPLSSAHQEYVNHMHPPTFRTWSVPHVNMAVANPRQWPTSMVPAQQQQMPPPQHAQYLQTHPGAMAAPMPPPNYAQPSTHHPYAYQDGVMRPQVTTSSTLAPDVYRNMLVDQPLSRRHSTAYDLSNSSHAIGLTQTMSNNPVDPIRNMSHPFMQATPVYGNSGRLQEPVQHSDAFPSPRTLPQQEPGLDGSQQHSASLKLEGEESHLQHNNSWGTYDVAATHDVFLGGTNTDQSQPFLNPEGEEEQYDENNPPPTWPPGSNNSMGRL</sequence>
<accession>G2X740</accession>
<feature type="chain" id="PRO_0000431525" description="Global transcription regulator sge1">
    <location>
        <begin position="1"/>
        <end position="510"/>
    </location>
</feature>
<feature type="region of interest" description="Disordered" evidence="2">
    <location>
        <begin position="94"/>
        <end position="152"/>
    </location>
</feature>
<feature type="region of interest" description="Disordered" evidence="2">
    <location>
        <begin position="393"/>
        <end position="438"/>
    </location>
</feature>
<feature type="region of interest" description="Disordered" evidence="2">
    <location>
        <begin position="469"/>
        <end position="510"/>
    </location>
</feature>
<feature type="compositionally biased region" description="Low complexity" evidence="2">
    <location>
        <begin position="123"/>
        <end position="143"/>
    </location>
</feature>
<feature type="compositionally biased region" description="Polar residues" evidence="2">
    <location>
        <begin position="471"/>
        <end position="480"/>
    </location>
</feature>
<feature type="compositionally biased region" description="Polar residues" evidence="2">
    <location>
        <begin position="501"/>
        <end position="510"/>
    </location>
</feature>